<organism>
    <name type="scientific">Escherichia coli (strain UTI89 / UPEC)</name>
    <dbReference type="NCBI Taxonomy" id="364106"/>
    <lineage>
        <taxon>Bacteria</taxon>
        <taxon>Pseudomonadati</taxon>
        <taxon>Pseudomonadota</taxon>
        <taxon>Gammaproteobacteria</taxon>
        <taxon>Enterobacterales</taxon>
        <taxon>Enterobacteriaceae</taxon>
        <taxon>Escherichia</taxon>
    </lineage>
</organism>
<feature type="chain" id="PRO_0000252223" description="UPF0757 protein YmgG">
    <location>
        <begin position="1"/>
        <end position="114"/>
    </location>
</feature>
<accession>Q1RCS7</accession>
<name>YMGG_ECOUT</name>
<sequence>MKKKILAFGLISALFCSTPAMADMNRTTKGALLGAGVGLLTGNGVNGVLKGAAVGAGVGAVTEKGRDGKNARKGAKVGAAVGAVTGVLTGNGLEGAIKGAVIGGTGGAILGKMK</sequence>
<proteinExistence type="inferred from homology"/>
<reference key="1">
    <citation type="journal article" date="2006" name="Proc. Natl. Acad. Sci. U.S.A.">
        <title>Identification of genes subject to positive selection in uropathogenic strains of Escherichia coli: a comparative genomics approach.</title>
        <authorList>
            <person name="Chen S.L."/>
            <person name="Hung C.-S."/>
            <person name="Xu J."/>
            <person name="Reigstad C.S."/>
            <person name="Magrini V."/>
            <person name="Sabo A."/>
            <person name="Blasiar D."/>
            <person name="Bieri T."/>
            <person name="Meyer R.R."/>
            <person name="Ozersky P."/>
            <person name="Armstrong J.R."/>
            <person name="Fulton R.S."/>
            <person name="Latreille J.P."/>
            <person name="Spieth J."/>
            <person name="Hooton T.M."/>
            <person name="Mardis E.R."/>
            <person name="Hultgren S.J."/>
            <person name="Gordon J.I."/>
        </authorList>
    </citation>
    <scope>NUCLEOTIDE SEQUENCE [LARGE SCALE GENOMIC DNA]</scope>
    <source>
        <strain>UTI89 / UPEC</strain>
    </source>
</reference>
<comment type="similarity">
    <text evidence="1">Belongs to the UPF0757 family.</text>
</comment>
<comment type="sequence caution" evidence="2">
    <conflict type="erroneous initiation">
        <sequence resource="EMBL-CDS" id="ABE06837"/>
    </conflict>
</comment>
<dbReference type="EMBL" id="CP000243">
    <property type="protein sequence ID" value="ABE06837.1"/>
    <property type="status" value="ALT_INIT"/>
    <property type="molecule type" value="Genomic_DNA"/>
</dbReference>
<dbReference type="RefSeq" id="WP_000726974.1">
    <property type="nucleotide sequence ID" value="NZ_CP064825.1"/>
</dbReference>
<dbReference type="KEGG" id="eci:UTI89_C1355"/>
<dbReference type="HOGENOM" id="CLU_164687_0_0_6"/>
<dbReference type="Proteomes" id="UP000001952">
    <property type="component" value="Chromosome"/>
</dbReference>
<dbReference type="HAMAP" id="MF_01455">
    <property type="entry name" value="UPF0757"/>
    <property type="match status" value="1"/>
</dbReference>
<dbReference type="InterPro" id="IPR025693">
    <property type="entry name" value="Gly-zipper_OmpA-like_dom"/>
</dbReference>
<dbReference type="InterPro" id="IPR027367">
    <property type="entry name" value="Gly-zipper_YMGG"/>
</dbReference>
<dbReference type="InterPro" id="IPR022833">
    <property type="entry name" value="UPF0757_YmgG"/>
</dbReference>
<dbReference type="Pfam" id="PF13436">
    <property type="entry name" value="Gly-zipper_OmpA"/>
    <property type="match status" value="1"/>
</dbReference>
<dbReference type="Pfam" id="PF13441">
    <property type="entry name" value="Gly-zipper_YMGG"/>
    <property type="match status" value="1"/>
</dbReference>
<protein>
    <recommendedName>
        <fullName evidence="1">UPF0757 protein YmgG</fullName>
    </recommendedName>
</protein>
<evidence type="ECO:0000255" key="1">
    <source>
        <dbReference type="HAMAP-Rule" id="MF_01455"/>
    </source>
</evidence>
<evidence type="ECO:0000305" key="2"/>
<gene>
    <name evidence="1" type="primary">ymgG</name>
    <name type="ordered locus">UTI89_C1355</name>
</gene>